<keyword id="KW-0067">ATP-binding</keyword>
<keyword id="KW-0143">Chaperone</keyword>
<keyword id="KW-0963">Cytoplasm</keyword>
<keyword id="KW-0413">Isomerase</keyword>
<keyword id="KW-0547">Nucleotide-binding</keyword>
<keyword id="KW-1185">Reference proteome</keyword>
<feature type="chain" id="PRO_0000332053" description="Chaperonin GroEL 3">
    <location>
        <begin position="1"/>
        <end position="544"/>
    </location>
</feature>
<feature type="binding site" evidence="1">
    <location>
        <begin position="30"/>
        <end position="33"/>
    </location>
    <ligand>
        <name>ATP</name>
        <dbReference type="ChEBI" id="CHEBI:30616"/>
    </ligand>
</feature>
<feature type="binding site" evidence="1">
    <location>
        <position position="51"/>
    </location>
    <ligand>
        <name>ATP</name>
        <dbReference type="ChEBI" id="CHEBI:30616"/>
    </ligand>
</feature>
<feature type="binding site" evidence="1">
    <location>
        <begin position="87"/>
        <end position="91"/>
    </location>
    <ligand>
        <name>ATP</name>
        <dbReference type="ChEBI" id="CHEBI:30616"/>
    </ligand>
</feature>
<feature type="binding site" evidence="1">
    <location>
        <position position="415"/>
    </location>
    <ligand>
        <name>ATP</name>
        <dbReference type="ChEBI" id="CHEBI:30616"/>
    </ligand>
</feature>
<feature type="binding site" evidence="1">
    <location>
        <position position="495"/>
    </location>
    <ligand>
        <name>ATP</name>
        <dbReference type="ChEBI" id="CHEBI:30616"/>
    </ligand>
</feature>
<protein>
    <recommendedName>
        <fullName evidence="1">Chaperonin GroEL 3</fullName>
        <ecNumber evidence="1">5.6.1.7</ecNumber>
    </recommendedName>
    <alternativeName>
        <fullName evidence="1">60 kDa chaperonin 3</fullName>
    </alternativeName>
    <alternativeName>
        <fullName evidence="1">Chaperonin-60 3</fullName>
        <shortName evidence="1">Cpn60 3</shortName>
    </alternativeName>
</protein>
<organism>
    <name type="scientific">Psychromonas ingrahamii (strain DSM 17664 / CCUG 51855 / 37)</name>
    <dbReference type="NCBI Taxonomy" id="357804"/>
    <lineage>
        <taxon>Bacteria</taxon>
        <taxon>Pseudomonadati</taxon>
        <taxon>Pseudomonadota</taxon>
        <taxon>Gammaproteobacteria</taxon>
        <taxon>Alteromonadales</taxon>
        <taxon>Psychromonadaceae</taxon>
        <taxon>Psychromonas</taxon>
    </lineage>
</organism>
<gene>
    <name evidence="1" type="primary">groEL3</name>
    <name evidence="1" type="synonym">groL3</name>
    <name type="ordered locus">Ping_2791</name>
</gene>
<proteinExistence type="inferred from homology"/>
<evidence type="ECO:0000255" key="1">
    <source>
        <dbReference type="HAMAP-Rule" id="MF_00600"/>
    </source>
</evidence>
<dbReference type="EC" id="5.6.1.7" evidence="1"/>
<dbReference type="EMBL" id="CP000510">
    <property type="protein sequence ID" value="ABM04498.1"/>
    <property type="molecule type" value="Genomic_DNA"/>
</dbReference>
<dbReference type="RefSeq" id="WP_011771053.1">
    <property type="nucleotide sequence ID" value="NC_008709.1"/>
</dbReference>
<dbReference type="SMR" id="A1SYD3"/>
<dbReference type="STRING" id="357804.Ping_2791"/>
<dbReference type="KEGG" id="pin:Ping_2791"/>
<dbReference type="eggNOG" id="COG0459">
    <property type="taxonomic scope" value="Bacteria"/>
</dbReference>
<dbReference type="HOGENOM" id="CLU_016503_3_0_6"/>
<dbReference type="OrthoDB" id="9766614at2"/>
<dbReference type="Proteomes" id="UP000000639">
    <property type="component" value="Chromosome"/>
</dbReference>
<dbReference type="GO" id="GO:0005737">
    <property type="term" value="C:cytoplasm"/>
    <property type="evidence" value="ECO:0007669"/>
    <property type="project" value="UniProtKB-SubCell"/>
</dbReference>
<dbReference type="GO" id="GO:0005524">
    <property type="term" value="F:ATP binding"/>
    <property type="evidence" value="ECO:0007669"/>
    <property type="project" value="UniProtKB-UniRule"/>
</dbReference>
<dbReference type="GO" id="GO:0140662">
    <property type="term" value="F:ATP-dependent protein folding chaperone"/>
    <property type="evidence" value="ECO:0007669"/>
    <property type="project" value="InterPro"/>
</dbReference>
<dbReference type="GO" id="GO:0016853">
    <property type="term" value="F:isomerase activity"/>
    <property type="evidence" value="ECO:0007669"/>
    <property type="project" value="UniProtKB-KW"/>
</dbReference>
<dbReference type="GO" id="GO:0051082">
    <property type="term" value="F:unfolded protein binding"/>
    <property type="evidence" value="ECO:0007669"/>
    <property type="project" value="UniProtKB-UniRule"/>
</dbReference>
<dbReference type="GO" id="GO:0042026">
    <property type="term" value="P:protein refolding"/>
    <property type="evidence" value="ECO:0007669"/>
    <property type="project" value="UniProtKB-UniRule"/>
</dbReference>
<dbReference type="CDD" id="cd03344">
    <property type="entry name" value="GroEL"/>
    <property type="match status" value="1"/>
</dbReference>
<dbReference type="FunFam" id="3.50.7.10:FF:000001">
    <property type="entry name" value="60 kDa chaperonin"/>
    <property type="match status" value="1"/>
</dbReference>
<dbReference type="Gene3D" id="3.50.7.10">
    <property type="entry name" value="GroEL"/>
    <property type="match status" value="1"/>
</dbReference>
<dbReference type="Gene3D" id="1.10.560.10">
    <property type="entry name" value="GroEL-like equatorial domain"/>
    <property type="match status" value="1"/>
</dbReference>
<dbReference type="Gene3D" id="3.30.260.10">
    <property type="entry name" value="TCP-1-like chaperonin intermediate domain"/>
    <property type="match status" value="1"/>
</dbReference>
<dbReference type="HAMAP" id="MF_00600">
    <property type="entry name" value="CH60"/>
    <property type="match status" value="1"/>
</dbReference>
<dbReference type="InterPro" id="IPR001844">
    <property type="entry name" value="Cpn60/GroEL"/>
</dbReference>
<dbReference type="InterPro" id="IPR002423">
    <property type="entry name" value="Cpn60/GroEL/TCP-1"/>
</dbReference>
<dbReference type="InterPro" id="IPR027409">
    <property type="entry name" value="GroEL-like_apical_dom_sf"/>
</dbReference>
<dbReference type="InterPro" id="IPR027413">
    <property type="entry name" value="GROEL-like_equatorial_sf"/>
</dbReference>
<dbReference type="InterPro" id="IPR027410">
    <property type="entry name" value="TCP-1-like_intermed_sf"/>
</dbReference>
<dbReference type="NCBIfam" id="TIGR02348">
    <property type="entry name" value="GroEL"/>
    <property type="match status" value="1"/>
</dbReference>
<dbReference type="NCBIfam" id="NF000592">
    <property type="entry name" value="PRK00013.1"/>
    <property type="match status" value="1"/>
</dbReference>
<dbReference type="NCBIfam" id="NF009487">
    <property type="entry name" value="PRK12849.1"/>
    <property type="match status" value="1"/>
</dbReference>
<dbReference type="NCBIfam" id="NF009488">
    <property type="entry name" value="PRK12850.1"/>
    <property type="match status" value="1"/>
</dbReference>
<dbReference type="NCBIfam" id="NF009489">
    <property type="entry name" value="PRK12851.1"/>
    <property type="match status" value="1"/>
</dbReference>
<dbReference type="PANTHER" id="PTHR45633">
    <property type="entry name" value="60 KDA HEAT SHOCK PROTEIN, MITOCHONDRIAL"/>
    <property type="match status" value="1"/>
</dbReference>
<dbReference type="Pfam" id="PF00118">
    <property type="entry name" value="Cpn60_TCP1"/>
    <property type="match status" value="1"/>
</dbReference>
<dbReference type="PRINTS" id="PR00298">
    <property type="entry name" value="CHAPERONIN60"/>
</dbReference>
<dbReference type="SUPFAM" id="SSF52029">
    <property type="entry name" value="GroEL apical domain-like"/>
    <property type="match status" value="1"/>
</dbReference>
<dbReference type="SUPFAM" id="SSF48592">
    <property type="entry name" value="GroEL equatorial domain-like"/>
    <property type="match status" value="1"/>
</dbReference>
<dbReference type="SUPFAM" id="SSF54849">
    <property type="entry name" value="GroEL-intermediate domain like"/>
    <property type="match status" value="2"/>
</dbReference>
<accession>A1SYD3</accession>
<reference key="1">
    <citation type="journal article" date="2008" name="BMC Genomics">
        <title>Genomics of an extreme psychrophile, Psychromonas ingrahamii.</title>
        <authorList>
            <person name="Riley M."/>
            <person name="Staley J.T."/>
            <person name="Danchin A."/>
            <person name="Wang T.Z."/>
            <person name="Brettin T.S."/>
            <person name="Hauser L.J."/>
            <person name="Land M.L."/>
            <person name="Thompson L.S."/>
        </authorList>
    </citation>
    <scope>NUCLEOTIDE SEQUENCE [LARGE SCALE GENOMIC DNA]</scope>
    <source>
        <strain>DSM 17664 / CCUG 51855 / 37</strain>
    </source>
</reference>
<sequence>MSAKAIKFNHHAREKMLKGVNILADSVKVTLGPKGRNVVIAQKYSRPIITKDGVTVAKEIELIDPFENMGAQLTKEVAFQASDSAGDGTTTATVLTQAIVNEGVNAISANMNPIDLKKGIDKCLHYALLELNLLSQNCDNLEKAEQIATISANGEEQIGKLIAQAMERIGTDGVVSVEDAQGYDDELIFKEGLAFDRGYLSPYFINNHEKSTVELNNPSILLLDDKLTHMEDLLPLLEKLANNRNPLLVIAEDINNEVLSRIIGNNMKNNLKVTVIKSPAFGSRRTEILQDLAIYTGGTVISPEIGMDLSEVDTDKLGNASKIIITDSNTTIVHGEGDPQLIMQRIKQLNSQLLNSSSEYDQKKLAERVAKLSGAIAIIKVGAATEVAMKEKKDRVEDALHATKAAIKEGIVPGGGVAYIRIAQTLASLEGDNPDQSFGIKILLKAMESPLKQIAKNAGNEPVEVLSTIKKQTGNFGFDAKNDRYGDMMEFGIIDPTKVTRCALEFAASIASLILTTEVMVADMEDNNANHANHDHAHSLNCSH</sequence>
<comment type="function">
    <text evidence="1">Together with its co-chaperonin GroES, plays an essential role in assisting protein folding. The GroEL-GroES system forms a nano-cage that allows encapsulation of the non-native substrate proteins and provides a physical environment optimized to promote and accelerate protein folding.</text>
</comment>
<comment type="catalytic activity">
    <reaction evidence="1">
        <text>ATP + H2O + a folded polypeptide = ADP + phosphate + an unfolded polypeptide.</text>
        <dbReference type="EC" id="5.6.1.7"/>
    </reaction>
</comment>
<comment type="subunit">
    <text evidence="1">Forms a cylinder of 14 subunits composed of two heptameric rings stacked back-to-back. Interacts with the co-chaperonin GroES.</text>
</comment>
<comment type="subcellular location">
    <subcellularLocation>
        <location evidence="1">Cytoplasm</location>
    </subcellularLocation>
</comment>
<comment type="similarity">
    <text evidence="1">Belongs to the chaperonin (HSP60) family.</text>
</comment>
<name>CH603_PSYIN</name>